<feature type="chain" id="PRO_0000050417" description="High-affinity glucose transporter">
    <location>
        <begin position="1"/>
        <end position="545"/>
    </location>
</feature>
<feature type="topological domain" description="Cytoplasmic" evidence="1">
    <location>
        <begin position="1"/>
        <end position="28"/>
    </location>
</feature>
<feature type="transmembrane region" description="Helical; Name=1" evidence="1">
    <location>
        <begin position="29"/>
        <end position="49"/>
    </location>
</feature>
<feature type="topological domain" description="Extracellular" evidence="1">
    <location>
        <begin position="50"/>
        <end position="71"/>
    </location>
</feature>
<feature type="transmembrane region" description="Helical; Name=2" evidence="1">
    <location>
        <begin position="72"/>
        <end position="92"/>
    </location>
</feature>
<feature type="topological domain" description="Cytoplasmic" evidence="1">
    <location>
        <begin position="93"/>
        <end position="99"/>
    </location>
</feature>
<feature type="transmembrane region" description="Helical; Name=3" evidence="1">
    <location>
        <begin position="100"/>
        <end position="120"/>
    </location>
</feature>
<feature type="topological domain" description="Extracellular" evidence="1">
    <location>
        <begin position="121"/>
        <end position="124"/>
    </location>
</feature>
<feature type="transmembrane region" description="Helical; Name=4" evidence="1">
    <location>
        <begin position="125"/>
        <end position="145"/>
    </location>
</feature>
<feature type="topological domain" description="Cytoplasmic" evidence="1">
    <location>
        <begin position="146"/>
        <end position="156"/>
    </location>
</feature>
<feature type="transmembrane region" description="Helical; Name=5" evidence="1">
    <location>
        <begin position="157"/>
        <end position="177"/>
    </location>
</feature>
<feature type="topological domain" description="Extracellular" evidence="1">
    <location>
        <begin position="178"/>
        <end position="191"/>
    </location>
</feature>
<feature type="transmembrane region" description="Helical; Name=6" evidence="1">
    <location>
        <begin position="192"/>
        <end position="212"/>
    </location>
</feature>
<feature type="topological domain" description="Cytoplasmic" evidence="1">
    <location>
        <begin position="213"/>
        <end position="290"/>
    </location>
</feature>
<feature type="transmembrane region" description="Helical; Name=7" evidence="1">
    <location>
        <begin position="291"/>
        <end position="311"/>
    </location>
</feature>
<feature type="topological domain" description="Extracellular" evidence="1">
    <location>
        <begin position="312"/>
        <end position="316"/>
    </location>
</feature>
<feature type="transmembrane region" description="Helical; Name=8" evidence="1">
    <location>
        <begin position="317"/>
        <end position="337"/>
    </location>
</feature>
<feature type="topological domain" description="Cytoplasmic" evidence="1">
    <location>
        <begin position="338"/>
        <end position="344"/>
    </location>
</feature>
<feature type="transmembrane region" description="Helical; Name=9" evidence="1">
    <location>
        <begin position="345"/>
        <end position="365"/>
    </location>
</feature>
<feature type="topological domain" description="Extracellular" evidence="1">
    <location>
        <begin position="366"/>
        <end position="394"/>
    </location>
</feature>
<feature type="transmembrane region" description="Helical; Name=10" evidence="1">
    <location>
        <begin position="395"/>
        <end position="415"/>
    </location>
</feature>
<feature type="topological domain" description="Cytoplasmic" evidence="1">
    <location>
        <begin position="416"/>
        <end position="432"/>
    </location>
</feature>
<feature type="transmembrane region" description="Helical; Name=11" evidence="1">
    <location>
        <begin position="433"/>
        <end position="453"/>
    </location>
</feature>
<feature type="topological domain" description="Extracellular" evidence="1">
    <location>
        <begin position="454"/>
        <end position="459"/>
    </location>
</feature>
<feature type="transmembrane region" description="Helical; Name=12" evidence="1">
    <location>
        <begin position="460"/>
        <end position="480"/>
    </location>
</feature>
<feature type="topological domain" description="Cytoplasmic" evidence="1">
    <location>
        <begin position="481"/>
        <end position="545"/>
    </location>
</feature>
<feature type="region of interest" description="Disordered" evidence="2">
    <location>
        <begin position="524"/>
        <end position="545"/>
    </location>
</feature>
<feature type="glycosylation site" description="N-linked (GlcNAc...) asparagine" evidence="1">
    <location>
        <position position="376"/>
    </location>
</feature>
<feature type="glycosylation site" description="N-linked (GlcNAc...) asparagine" evidence="1">
    <location>
        <position position="387"/>
    </location>
</feature>
<organism>
    <name type="scientific">Candida albicans</name>
    <name type="common">Yeast</name>
    <dbReference type="NCBI Taxonomy" id="5476"/>
    <lineage>
        <taxon>Eukaryota</taxon>
        <taxon>Fungi</taxon>
        <taxon>Dikarya</taxon>
        <taxon>Ascomycota</taxon>
        <taxon>Saccharomycotina</taxon>
        <taxon>Pichiomycetes</taxon>
        <taxon>Debaryomycetaceae</taxon>
        <taxon>Candida/Lodderomyces clade</taxon>
        <taxon>Candida</taxon>
    </lineage>
</organism>
<sequence length="545" mass="60670">MSSKIERIFSGPALKINTYLDKLPKIYNVFFIASISTIAGMMFGFDISSMSAFIGAEHYMRYFNSPGSDIQGFITSSMALGSFFGSIASSFVSEPFGRRLSLLTCAFFWMVGAAIQSSVQNRAQLIIGRIISGIGVGFGSAVAPVYGAELAPRKIRGLIGGMFQFFVTLGIMIMFYLSFGLGHINGVASFRIAWGLQIVPGLCLFLGCFFIPESPRWLAKQGQWEAAEEIVAKIQAHGDRENPDVLIEISEIKDQLLLEESSKQIGYATLFTKKYIQRTFTAIFAQIWQQLTGMNVMMYYIVYIFQMAGYSGNSNLVASSIQYVINTCVTVPALYFIDKVGRRPLLIGGATMMMAFQFGLAGILGQYSIPWPDSGNDSVNIRIPEDNKSASKGAIACCYLFVASFAFTWGVGIWVYCAEIWGDNRVAQRGNAISTSANWILNFAIAMYTPTGFKNISWKTYIIYGVFCFAMATHVYFGFPETKGKRLEEIGQMWEERVPAWRSRSWQPTVPIASDAELARKMEVEHEEDKLMNEDSNSESRENQA</sequence>
<gene>
    <name type="primary">HGT1</name>
</gene>
<reference key="1">
    <citation type="journal article" date="2000" name="FEMS Microbiol. Lett.">
        <title>Molecular cloning and functional characterisation of a glucose transporter, CaHGT1, of Candida albicans.</title>
        <authorList>
            <person name="Varma A."/>
            <person name="Singh B.B."/>
            <person name="Karnani N."/>
            <person name="Lichtenberg-Frate H."/>
            <person name="Hofer M."/>
            <person name="Magee B.B."/>
            <person name="Prasad R."/>
        </authorList>
    </citation>
    <scope>NUCLEOTIDE SEQUENCE [GENOMIC DNA]</scope>
    <source>
        <strain>ATCC 10261 / CBS 2718 / NBRC 1061 / FMJ 1011</strain>
    </source>
</reference>
<protein>
    <recommendedName>
        <fullName>High-affinity glucose transporter</fullName>
    </recommendedName>
</protein>
<proteinExistence type="inferred from homology"/>
<evidence type="ECO:0000255" key="1"/>
<evidence type="ECO:0000256" key="2">
    <source>
        <dbReference type="SAM" id="MobiDB-lite"/>
    </source>
</evidence>
<evidence type="ECO:0000305" key="3"/>
<comment type="function">
    <text>High-affinity glucose transporter.</text>
</comment>
<comment type="subcellular location">
    <subcellularLocation>
        <location>Membrane</location>
        <topology>Multi-pass membrane protein</topology>
    </subcellularLocation>
</comment>
<comment type="similarity">
    <text evidence="3">Belongs to the major facilitator superfamily. Sugar transporter (TC 2.A.1.1) family.</text>
</comment>
<dbReference type="EMBL" id="Y16834">
    <property type="protein sequence ID" value="CAA76406.1"/>
    <property type="molecule type" value="Genomic_DNA"/>
</dbReference>
<dbReference type="SMR" id="O74713"/>
<dbReference type="MoonProt" id="O74713"/>
<dbReference type="GlyCosmos" id="O74713">
    <property type="glycosylation" value="2 sites, No reported glycans"/>
</dbReference>
<dbReference type="EnsemblFungi" id="C1_01980W_A-T">
    <property type="protein sequence ID" value="C1_01980W_A-T-p1"/>
    <property type="gene ID" value="C1_01980W_A"/>
</dbReference>
<dbReference type="VEuPathDB" id="FungiDB:C1_01980W_A"/>
<dbReference type="VEuPathDB" id="FungiDB:CAWG_01184"/>
<dbReference type="GO" id="GO:0016020">
    <property type="term" value="C:membrane"/>
    <property type="evidence" value="ECO:0007669"/>
    <property type="project" value="UniProtKB-SubCell"/>
</dbReference>
<dbReference type="GO" id="GO:0005351">
    <property type="term" value="F:carbohydrate:proton symporter activity"/>
    <property type="evidence" value="ECO:0007669"/>
    <property type="project" value="TreeGrafter"/>
</dbReference>
<dbReference type="CDD" id="cd17356">
    <property type="entry name" value="MFS_HXT"/>
    <property type="match status" value="1"/>
</dbReference>
<dbReference type="FunFam" id="1.20.1250.20:FF:000026">
    <property type="entry name" value="MFS quinate transporter QutD"/>
    <property type="match status" value="1"/>
</dbReference>
<dbReference type="Gene3D" id="1.20.1250.20">
    <property type="entry name" value="MFS general substrate transporter like domains"/>
    <property type="match status" value="1"/>
</dbReference>
<dbReference type="InterPro" id="IPR020846">
    <property type="entry name" value="MFS_dom"/>
</dbReference>
<dbReference type="InterPro" id="IPR005828">
    <property type="entry name" value="MFS_sugar_transport-like"/>
</dbReference>
<dbReference type="InterPro" id="IPR050360">
    <property type="entry name" value="MFS_Sugar_Transporters"/>
</dbReference>
<dbReference type="InterPro" id="IPR036259">
    <property type="entry name" value="MFS_trans_sf"/>
</dbReference>
<dbReference type="InterPro" id="IPR003663">
    <property type="entry name" value="Sugar/inositol_transpt"/>
</dbReference>
<dbReference type="InterPro" id="IPR005829">
    <property type="entry name" value="Sugar_transporter_CS"/>
</dbReference>
<dbReference type="NCBIfam" id="TIGR00879">
    <property type="entry name" value="SP"/>
    <property type="match status" value="1"/>
</dbReference>
<dbReference type="PANTHER" id="PTHR48022:SF7">
    <property type="entry name" value="MAJOR FACILITATOR SUPERFAMILY (MFS) PROFILE DOMAIN-CONTAINING PROTEIN-RELATED"/>
    <property type="match status" value="1"/>
</dbReference>
<dbReference type="PANTHER" id="PTHR48022">
    <property type="entry name" value="PLASTIDIC GLUCOSE TRANSPORTER 4"/>
    <property type="match status" value="1"/>
</dbReference>
<dbReference type="Pfam" id="PF00083">
    <property type="entry name" value="Sugar_tr"/>
    <property type="match status" value="1"/>
</dbReference>
<dbReference type="PRINTS" id="PR00171">
    <property type="entry name" value="SUGRTRNSPORT"/>
</dbReference>
<dbReference type="SUPFAM" id="SSF103473">
    <property type="entry name" value="MFS general substrate transporter"/>
    <property type="match status" value="1"/>
</dbReference>
<dbReference type="PROSITE" id="PS50850">
    <property type="entry name" value="MFS"/>
    <property type="match status" value="1"/>
</dbReference>
<dbReference type="PROSITE" id="PS00216">
    <property type="entry name" value="SUGAR_TRANSPORT_1"/>
    <property type="match status" value="2"/>
</dbReference>
<dbReference type="PROSITE" id="PS00217">
    <property type="entry name" value="SUGAR_TRANSPORT_2"/>
    <property type="match status" value="1"/>
</dbReference>
<keyword id="KW-0325">Glycoprotein</keyword>
<keyword id="KW-0472">Membrane</keyword>
<keyword id="KW-0762">Sugar transport</keyword>
<keyword id="KW-0812">Transmembrane</keyword>
<keyword id="KW-1133">Transmembrane helix</keyword>
<keyword id="KW-0813">Transport</keyword>
<name>HGT1_CANAX</name>
<accession>O74713</accession>